<evidence type="ECO:0000250" key="1">
    <source>
        <dbReference type="UniProtKB" id="Q8I7F8"/>
    </source>
</evidence>
<evidence type="ECO:0000255" key="2"/>
<evidence type="ECO:0000305" key="3"/>
<reference key="1">
    <citation type="submission" date="2006-08" db="EMBL/GenBank/DDBJ databases">
        <authorList>
            <consortium name="NIH - Xenopus Gene Collection (XGC) project"/>
        </authorList>
    </citation>
    <scope>NUCLEOTIDE SEQUENCE [LARGE SCALE MRNA]</scope>
    <source>
        <tissue>Brain</tissue>
    </source>
</reference>
<protein>
    <recommendedName>
        <fullName>Protein odr-4 homolog</fullName>
    </recommendedName>
</protein>
<feature type="chain" id="PRO_0000304688" description="Protein odr-4 homolog">
    <location>
        <begin position="1"/>
        <end position="448"/>
    </location>
</feature>
<feature type="transmembrane region" description="Helical" evidence="2">
    <location>
        <begin position="76"/>
        <end position="96"/>
    </location>
</feature>
<feature type="transmembrane region" description="Helical" evidence="2">
    <location>
        <begin position="428"/>
        <end position="448"/>
    </location>
</feature>
<organism>
    <name type="scientific">Xenopus tropicalis</name>
    <name type="common">Western clawed frog</name>
    <name type="synonym">Silurana tropicalis</name>
    <dbReference type="NCBI Taxonomy" id="8364"/>
    <lineage>
        <taxon>Eukaryota</taxon>
        <taxon>Metazoa</taxon>
        <taxon>Chordata</taxon>
        <taxon>Craniata</taxon>
        <taxon>Vertebrata</taxon>
        <taxon>Euteleostomi</taxon>
        <taxon>Amphibia</taxon>
        <taxon>Batrachia</taxon>
        <taxon>Anura</taxon>
        <taxon>Pipoidea</taxon>
        <taxon>Pipidae</taxon>
        <taxon>Xenopodinae</taxon>
        <taxon>Xenopus</taxon>
        <taxon>Silurana</taxon>
    </lineage>
</organism>
<proteinExistence type="evidence at transcript level"/>
<sequence length="448" mass="50270">MGRSYYVDDGVEKYFSKLIQQQKAYVTGLLIGQYSSQRDYAVLAAQTPQKEDQSEETKSGFSKLEGIDDEWVSMHASQLGRMLPGGLMVLGVFLMTSPDLSKDAQNVLRKLVFTVEKSSMKNRLWNFDDDDVSERVTLHICSATKKITCRTYDINDPKSTPKPADWKYQSSGLSWLTIDCSVRVDVTIPLTSSSLTYQERQKSIRLGLVKWAKEIEDSLVLFNGQVKDKSADLFEEQKKSSRSSSHYSPQIITANVLTAAPLIDSTRSTALVQPCKSSLTIQGVVKCCGYIHSNRPKVKDALQAVKRDILNTIQARCEMLFEDMMLNGPSKGTENEVCPLPQRVFVPIKGSSLKLCDYLFGDETSSDLQSHFLEIMDQEVEQNELEFPEKKCSCTQPEERESEPVSYNLESKPVDQANSSSKFLLNKGLLISTVVASIAVIISFYYII</sequence>
<name>ODR4_XENTR</name>
<keyword id="KW-0472">Membrane</keyword>
<keyword id="KW-1185">Reference proteome</keyword>
<keyword id="KW-0812">Transmembrane</keyword>
<keyword id="KW-1133">Transmembrane helix</keyword>
<comment type="function">
    <text evidence="1">May play a role in the trafficking of a subset of G-protein coupled receptors.</text>
</comment>
<comment type="subcellular location">
    <subcellularLocation>
        <location evidence="2">Membrane</location>
        <topology evidence="2">Multi-pass membrane protein</topology>
    </subcellularLocation>
</comment>
<comment type="similarity">
    <text evidence="3">Belongs to the ODR-4 family.</text>
</comment>
<comment type="sequence caution" evidence="3">
    <conflict type="erroneous initiation">
        <sequence resource="EMBL-CDS" id="AAI21274"/>
    </conflict>
</comment>
<dbReference type="EMBL" id="BC121273">
    <property type="protein sequence ID" value="AAI21274.1"/>
    <property type="status" value="ALT_INIT"/>
    <property type="molecule type" value="mRNA"/>
</dbReference>
<dbReference type="FunCoup" id="Q0VA36">
    <property type="interactions" value="1694"/>
</dbReference>
<dbReference type="STRING" id="8364.ENSXETP00000027705"/>
<dbReference type="PaxDb" id="8364-ENSXETP00000037840"/>
<dbReference type="eggNOG" id="KOG4703">
    <property type="taxonomic scope" value="Eukaryota"/>
</dbReference>
<dbReference type="InParanoid" id="Q0VA36"/>
<dbReference type="Proteomes" id="UP000008143">
    <property type="component" value="Unplaced"/>
</dbReference>
<dbReference type="GO" id="GO:0016020">
    <property type="term" value="C:membrane"/>
    <property type="evidence" value="ECO:0007669"/>
    <property type="project" value="UniProtKB-SubCell"/>
</dbReference>
<dbReference type="InterPro" id="IPR029454">
    <property type="entry name" value="ODR-4-like"/>
</dbReference>
<dbReference type="PANTHER" id="PTHR33966">
    <property type="entry name" value="PROTEIN ODR-4 HOMOLOG"/>
    <property type="match status" value="1"/>
</dbReference>
<dbReference type="PANTHER" id="PTHR33966:SF1">
    <property type="entry name" value="PROTEIN ODR-4 HOMOLOG"/>
    <property type="match status" value="1"/>
</dbReference>
<dbReference type="Pfam" id="PF14778">
    <property type="entry name" value="ODR4-like"/>
    <property type="match status" value="1"/>
</dbReference>
<accession>Q0VA36</accession>
<gene>
    <name type="primary">odr4</name>
</gene>